<accession>A8AV68</accession>
<feature type="chain" id="PRO_1000081841" description="Small ribosomal subunit protein uS9">
    <location>
        <begin position="1"/>
        <end position="130"/>
    </location>
</feature>
<keyword id="KW-1185">Reference proteome</keyword>
<keyword id="KW-0687">Ribonucleoprotein</keyword>
<keyword id="KW-0689">Ribosomal protein</keyword>
<reference key="1">
    <citation type="journal article" date="2007" name="J. Bacteriol.">
        <title>Genome-wide transcriptional changes in Streptococcus gordonii in response to competence signaling peptide.</title>
        <authorList>
            <person name="Vickerman M.M."/>
            <person name="Iobst S."/>
            <person name="Jesionowski A.M."/>
            <person name="Gill S.R."/>
        </authorList>
    </citation>
    <scope>NUCLEOTIDE SEQUENCE [LARGE SCALE GENOMIC DNA]</scope>
    <source>
        <strain>Challis / ATCC 35105 / BCRC 15272 / CH1 / DL1 / V288</strain>
    </source>
</reference>
<name>RS9_STRGC</name>
<protein>
    <recommendedName>
        <fullName evidence="1">Small ribosomal subunit protein uS9</fullName>
    </recommendedName>
    <alternativeName>
        <fullName evidence="2">30S ribosomal protein S9</fullName>
    </alternativeName>
</protein>
<sequence>MSQAQYAGTGRRKNAVARVRLVPGTGKITVNKKDVEEYIPHADLRLVINQPFAVTSTVGQYDVFVNVNGGGYGGQAGAIRHGIARALLQVDPDFRDSLKRAGLLTRDARMVERKKPGLKKARKASQFSKR</sequence>
<gene>
    <name evidence="1" type="primary">rpsI</name>
    <name type="ordered locus">SGO_0359</name>
</gene>
<proteinExistence type="inferred from homology"/>
<evidence type="ECO:0000255" key="1">
    <source>
        <dbReference type="HAMAP-Rule" id="MF_00532"/>
    </source>
</evidence>
<evidence type="ECO:0000305" key="2"/>
<comment type="similarity">
    <text evidence="1">Belongs to the universal ribosomal protein uS9 family.</text>
</comment>
<dbReference type="EMBL" id="CP000725">
    <property type="protein sequence ID" value="ABV10461.1"/>
    <property type="molecule type" value="Genomic_DNA"/>
</dbReference>
<dbReference type="RefSeq" id="WP_011999881.1">
    <property type="nucleotide sequence ID" value="NC_009785.1"/>
</dbReference>
<dbReference type="SMR" id="A8AV68"/>
<dbReference type="STRING" id="467705.SGO_0359"/>
<dbReference type="KEGG" id="sgo:SGO_0359"/>
<dbReference type="eggNOG" id="COG0103">
    <property type="taxonomic scope" value="Bacteria"/>
</dbReference>
<dbReference type="HOGENOM" id="CLU_046483_2_1_9"/>
<dbReference type="Proteomes" id="UP000001131">
    <property type="component" value="Chromosome"/>
</dbReference>
<dbReference type="GO" id="GO:0022627">
    <property type="term" value="C:cytosolic small ribosomal subunit"/>
    <property type="evidence" value="ECO:0007669"/>
    <property type="project" value="TreeGrafter"/>
</dbReference>
<dbReference type="GO" id="GO:0003723">
    <property type="term" value="F:RNA binding"/>
    <property type="evidence" value="ECO:0007669"/>
    <property type="project" value="TreeGrafter"/>
</dbReference>
<dbReference type="GO" id="GO:0003735">
    <property type="term" value="F:structural constituent of ribosome"/>
    <property type="evidence" value="ECO:0007669"/>
    <property type="project" value="InterPro"/>
</dbReference>
<dbReference type="GO" id="GO:0006412">
    <property type="term" value="P:translation"/>
    <property type="evidence" value="ECO:0007669"/>
    <property type="project" value="UniProtKB-UniRule"/>
</dbReference>
<dbReference type="FunFam" id="3.30.230.10:FF:000001">
    <property type="entry name" value="30S ribosomal protein S9"/>
    <property type="match status" value="1"/>
</dbReference>
<dbReference type="Gene3D" id="3.30.230.10">
    <property type="match status" value="1"/>
</dbReference>
<dbReference type="HAMAP" id="MF_00532_B">
    <property type="entry name" value="Ribosomal_uS9_B"/>
    <property type="match status" value="1"/>
</dbReference>
<dbReference type="InterPro" id="IPR020568">
    <property type="entry name" value="Ribosomal_Su5_D2-typ_SF"/>
</dbReference>
<dbReference type="InterPro" id="IPR000754">
    <property type="entry name" value="Ribosomal_uS9"/>
</dbReference>
<dbReference type="InterPro" id="IPR023035">
    <property type="entry name" value="Ribosomal_uS9_bac/plastid"/>
</dbReference>
<dbReference type="InterPro" id="IPR020574">
    <property type="entry name" value="Ribosomal_uS9_CS"/>
</dbReference>
<dbReference type="InterPro" id="IPR014721">
    <property type="entry name" value="Ribsml_uS5_D2-typ_fold_subgr"/>
</dbReference>
<dbReference type="NCBIfam" id="NF001099">
    <property type="entry name" value="PRK00132.1"/>
    <property type="match status" value="1"/>
</dbReference>
<dbReference type="PANTHER" id="PTHR21569">
    <property type="entry name" value="RIBOSOMAL PROTEIN S9"/>
    <property type="match status" value="1"/>
</dbReference>
<dbReference type="PANTHER" id="PTHR21569:SF1">
    <property type="entry name" value="SMALL RIBOSOMAL SUBUNIT PROTEIN US9M"/>
    <property type="match status" value="1"/>
</dbReference>
<dbReference type="Pfam" id="PF00380">
    <property type="entry name" value="Ribosomal_S9"/>
    <property type="match status" value="1"/>
</dbReference>
<dbReference type="SUPFAM" id="SSF54211">
    <property type="entry name" value="Ribosomal protein S5 domain 2-like"/>
    <property type="match status" value="1"/>
</dbReference>
<dbReference type="PROSITE" id="PS00360">
    <property type="entry name" value="RIBOSOMAL_S9"/>
    <property type="match status" value="1"/>
</dbReference>
<organism>
    <name type="scientific">Streptococcus gordonii (strain Challis / ATCC 35105 / BCRC 15272 / CH1 / DL1 / V288)</name>
    <dbReference type="NCBI Taxonomy" id="467705"/>
    <lineage>
        <taxon>Bacteria</taxon>
        <taxon>Bacillati</taxon>
        <taxon>Bacillota</taxon>
        <taxon>Bacilli</taxon>
        <taxon>Lactobacillales</taxon>
        <taxon>Streptococcaceae</taxon>
        <taxon>Streptococcus</taxon>
    </lineage>
</organism>